<feature type="initiator methionine" description="Removed" evidence="3">
    <location>
        <position position="1"/>
    </location>
</feature>
<feature type="chain" id="PRO_0000455397" description="Dibenzothiophene monooxygenase">
    <location>
        <begin position="2"/>
        <end position="417"/>
    </location>
</feature>
<feature type="region of interest" description="Helical N-terminus" evidence="2">
    <location>
        <begin position="18"/>
        <end position="124"/>
    </location>
</feature>
<feature type="region of interest" description="Central beta-barrel N-terminus" evidence="2">
    <location>
        <begin position="125"/>
        <end position="233"/>
    </location>
</feature>
<feature type="region of interest" description="Lid loop" evidence="2">
    <location>
        <begin position="131"/>
        <end position="142"/>
    </location>
</feature>
<feature type="region of interest" description="Helical C-terminus" evidence="2">
    <location>
        <begin position="234"/>
        <end position="417"/>
    </location>
</feature>
<feature type="binding site" evidence="2 9">
    <location>
        <position position="96"/>
    </location>
    <ligand>
        <name>FMN</name>
        <dbReference type="ChEBI" id="CHEBI:58210"/>
    </ligand>
</feature>
<feature type="binding site" evidence="2 9">
    <location>
        <begin position="129"/>
        <end position="134"/>
    </location>
    <ligand>
        <name>FMN</name>
        <dbReference type="ChEBI" id="CHEBI:58210"/>
    </ligand>
</feature>
<feature type="binding site" evidence="2 9">
    <location>
        <begin position="159"/>
        <end position="163"/>
    </location>
    <ligand>
        <name>FMN</name>
        <dbReference type="ChEBI" id="CHEBI:58210"/>
    </ligand>
</feature>
<feature type="binding site" evidence="2 9">
    <location>
        <position position="282"/>
    </location>
    <ligand>
        <name>FMN</name>
        <dbReference type="ChEBI" id="CHEBI:58210"/>
    </ligand>
</feature>
<feature type="binding site" evidence="2 9">
    <location>
        <begin position="369"/>
        <end position="370"/>
    </location>
    <ligand>
        <name>FMN</name>
        <dbReference type="ChEBI" id="CHEBI:58210"/>
    </ligand>
</feature>
<feature type="binding site" evidence="2 9">
    <location>
        <position position="391"/>
    </location>
    <ligand>
        <name>FMN</name>
        <dbReference type="ChEBI" id="CHEBI:58210"/>
    </ligand>
</feature>
<feature type="helix" evidence="10">
    <location>
        <begin position="20"/>
        <end position="41"/>
    </location>
</feature>
<feature type="helix" evidence="10">
    <location>
        <begin position="46"/>
        <end position="55"/>
    </location>
</feature>
<feature type="helix" evidence="10">
    <location>
        <begin position="57"/>
        <end position="59"/>
    </location>
</feature>
<feature type="strand" evidence="11">
    <location>
        <begin position="60"/>
        <end position="62"/>
    </location>
</feature>
<feature type="helix" evidence="10">
    <location>
        <begin position="64"/>
        <end position="66"/>
    </location>
</feature>
<feature type="helix" evidence="10">
    <location>
        <begin position="73"/>
        <end position="86"/>
    </location>
</feature>
<feature type="helix" evidence="10">
    <location>
        <begin position="88"/>
        <end position="100"/>
    </location>
</feature>
<feature type="helix" evidence="10">
    <location>
        <begin position="102"/>
        <end position="107"/>
    </location>
</feature>
<feature type="helix" evidence="10">
    <location>
        <begin position="110"/>
        <end position="122"/>
    </location>
</feature>
<feature type="strand" evidence="10">
    <location>
        <begin position="127"/>
        <end position="130"/>
    </location>
</feature>
<feature type="strand" evidence="11">
    <location>
        <begin position="135"/>
        <end position="137"/>
    </location>
</feature>
<feature type="helix" evidence="10">
    <location>
        <begin position="138"/>
        <end position="140"/>
    </location>
</feature>
<feature type="strand" evidence="10">
    <location>
        <begin position="144"/>
        <end position="147"/>
    </location>
</feature>
<feature type="strand" evidence="10">
    <location>
        <begin position="153"/>
        <end position="161"/>
    </location>
</feature>
<feature type="strand" evidence="10">
    <location>
        <begin position="169"/>
        <end position="177"/>
    </location>
</feature>
<feature type="strand" evidence="10">
    <location>
        <begin position="179"/>
        <end position="181"/>
    </location>
</feature>
<feature type="turn" evidence="10">
    <location>
        <begin position="182"/>
        <end position="185"/>
    </location>
</feature>
<feature type="strand" evidence="10">
    <location>
        <begin position="187"/>
        <end position="193"/>
    </location>
</feature>
<feature type="strand" evidence="10">
    <location>
        <begin position="199"/>
        <end position="201"/>
    </location>
</feature>
<feature type="strand" evidence="10">
    <location>
        <begin position="218"/>
        <end position="225"/>
    </location>
</feature>
<feature type="helix" evidence="10">
    <location>
        <begin position="227"/>
        <end position="229"/>
    </location>
</feature>
<feature type="strand" evidence="10">
    <location>
        <begin position="230"/>
        <end position="233"/>
    </location>
</feature>
<feature type="helix" evidence="10">
    <location>
        <begin position="236"/>
        <end position="242"/>
    </location>
</feature>
<feature type="helix" evidence="10">
    <location>
        <begin position="246"/>
        <end position="249"/>
    </location>
</feature>
<feature type="helix" evidence="10">
    <location>
        <begin position="250"/>
        <end position="279"/>
    </location>
</feature>
<feature type="helix" evidence="10">
    <location>
        <begin position="285"/>
        <end position="287"/>
    </location>
</feature>
<feature type="helix" evidence="10">
    <location>
        <begin position="292"/>
        <end position="294"/>
    </location>
</feature>
<feature type="helix" evidence="10">
    <location>
        <begin position="296"/>
        <end position="328"/>
    </location>
</feature>
<feature type="helix" evidence="10">
    <location>
        <begin position="329"/>
        <end position="332"/>
    </location>
</feature>
<feature type="helix" evidence="10">
    <location>
        <begin position="335"/>
        <end position="367"/>
    </location>
</feature>
<feature type="helix" evidence="10">
    <location>
        <begin position="369"/>
        <end position="372"/>
    </location>
</feature>
<feature type="turn" evidence="10">
    <location>
        <begin position="374"/>
        <end position="376"/>
    </location>
</feature>
<feature type="helix" evidence="10">
    <location>
        <begin position="380"/>
        <end position="388"/>
    </location>
</feature>
<feature type="helix" evidence="10">
    <location>
        <begin position="394"/>
        <end position="407"/>
    </location>
</feature>
<protein>
    <recommendedName>
        <fullName evidence="4">Dibenzothiophene monooxygenase</fullName>
        <shortName evidence="4">DBT monooxygenase</shortName>
        <shortName>DBT-MO</shortName>
        <ecNumber evidence="3">1.14.14.21</ecNumber>
    </recommendedName>
</protein>
<name>DSZC1_RHOER</name>
<reference evidence="8 9" key="1">
    <citation type="journal article" date="2015" name="FEBS J.">
        <title>Crystal structures of apo-DszC and FMN-bound DszC from Rhodococcus erythropolis D-1.</title>
        <authorList>
            <person name="Guan L.J."/>
            <person name="Lee W.C."/>
            <person name="Wang S."/>
            <person name="Ohshiro T."/>
            <person name="Izumi Y."/>
            <person name="Ohtsuka J."/>
            <person name="Tanokura M."/>
        </authorList>
    </citation>
    <scope>NUCLEOTIDE SEQUENCE [GENOMIC DNA]</scope>
    <scope>X-RAY CRYSTALLOGRAPHY (2.11 ANGSTROMS) IN COMPLEX WITH FMN</scope>
    <scope>PATHWAY</scope>
    <scope>SUBUNIT</scope>
    <scope>DOMAIN</scope>
    <source>
        <strain>D-1</strain>
    </source>
</reference>
<reference key="2">
    <citation type="journal article" date="1997" name="J. Ferment. Bioeng.">
        <title>Dibenzothiophene (DBT) Degrading Enzyme Responsible for the First Step of DBT Desulfurization by Rhodococcus erythropolis D-l: Purification and Characterization.</title>
        <authorList>
            <person name="Ohshiro T."/>
            <person name="Suzuki K."/>
            <person name="Izumi Y."/>
        </authorList>
    </citation>
    <scope>PROTEIN SEQUENCE OF 2-21</scope>
    <scope>FUNCTION</scope>
    <scope>SUBSTRATE SPECIFICITY</scope>
    <scope>CATALYTIC ACTIVITY</scope>
    <scope>ACTIVITY REGULATION</scope>
    <scope>BIOPHYSICOCHEMICAL PROPERTIES</scope>
    <scope>SUBCELLULAR LOCATION</scope>
    <source>
        <strain>D-1</strain>
    </source>
</reference>
<reference key="3">
    <citation type="journal article" date="2001" name="Appl. Environ. Microbiol.">
        <title>Purification, characterization, and overexpression of flavin reductase involved in dibenzothiophene desulfurization by Rhodococcus erythropolis D-1.</title>
        <authorList>
            <person name="Matsubara T."/>
            <person name="Ohshiro T."/>
            <person name="Nishina Y."/>
            <person name="Izumi Y."/>
        </authorList>
    </citation>
    <scope>FUNCTION</scope>
</reference>
<comment type="function">
    <text evidence="1 3">Catalyzes the first step of the '4S' desulfurization pathway that removes covalently bound sulfur from dibenzothiophene (DBT) without breaking carbon-carbon bonds. Sulfur dioxygenase which converts DBT to DBT-sulfone (DBTO2 or DBT 5,5-dioxide) in a stepwise manner (PubMed:11229908, Ref.2). Also acts on thioxanthen-9-one and 4,6-dimethyl DBT and 2,8-dimethyl DBT (Ref.2).</text>
</comment>
<comment type="catalytic activity">
    <reaction evidence="3">
        <text>dibenzothiophene + 2 FMNH2 + 2 O2 = dibenzothiophene 5,5-dioxide + 2 FMN + 2 H2O + 2 H(+)</text>
        <dbReference type="Rhea" id="RHEA:49072"/>
        <dbReference type="ChEBI" id="CHEBI:15377"/>
        <dbReference type="ChEBI" id="CHEBI:15378"/>
        <dbReference type="ChEBI" id="CHEBI:15379"/>
        <dbReference type="ChEBI" id="CHEBI:23681"/>
        <dbReference type="ChEBI" id="CHEBI:57618"/>
        <dbReference type="ChEBI" id="CHEBI:58210"/>
        <dbReference type="ChEBI" id="CHEBI:90356"/>
        <dbReference type="EC" id="1.14.14.21"/>
    </reaction>
</comment>
<comment type="catalytic activity">
    <reaction evidence="7">
        <text>dibenzothiophene + FMNH2 + O2 = dibenzothiophene 5-oxide + FMN + H2O + H(+)</text>
        <dbReference type="Rhea" id="RHEA:49076"/>
        <dbReference type="ChEBI" id="CHEBI:15377"/>
        <dbReference type="ChEBI" id="CHEBI:15378"/>
        <dbReference type="ChEBI" id="CHEBI:15379"/>
        <dbReference type="ChEBI" id="CHEBI:23681"/>
        <dbReference type="ChEBI" id="CHEBI:23683"/>
        <dbReference type="ChEBI" id="CHEBI:57618"/>
        <dbReference type="ChEBI" id="CHEBI:58210"/>
    </reaction>
</comment>
<comment type="catalytic activity">
    <reaction evidence="7">
        <text>dibenzothiophene 5-oxide + FMNH2 + O2 = dibenzothiophene 5,5-dioxide + FMN + H2O + H(+)</text>
        <dbReference type="Rhea" id="RHEA:49080"/>
        <dbReference type="ChEBI" id="CHEBI:15377"/>
        <dbReference type="ChEBI" id="CHEBI:15378"/>
        <dbReference type="ChEBI" id="CHEBI:15379"/>
        <dbReference type="ChEBI" id="CHEBI:23683"/>
        <dbReference type="ChEBI" id="CHEBI:57618"/>
        <dbReference type="ChEBI" id="CHEBI:58210"/>
        <dbReference type="ChEBI" id="CHEBI:90356"/>
    </reaction>
</comment>
<comment type="activity regulation">
    <text evidence="3">DBT degradation completely inhibited by Cu(2+), Mn(2+), p-chloromercuribenzoic acid, 2,2-bipyridyl, 1,10-phenanthroline, and strongly inhibited by Zn(2+), 5,5'- Dithiobis(2-nitrobenzoic acid) and 8-quinolinol.</text>
</comment>
<comment type="biophysicochemical properties">
    <phDependence>
        <text evidence="3">Optimum pH is 8.0.</text>
    </phDependence>
    <temperatureDependence>
        <text evidence="3">Optimum temperature is 40 degrees Celsius.</text>
    </temperatureDependence>
</comment>
<comment type="pathway">
    <text evidence="6">Sulfur metabolism; dibenzothiophene degradation.</text>
</comment>
<comment type="subunit">
    <text evidence="2">Homotetramer formed by a dimer of dimers; FMN binds between monomers of the homodimer.</text>
</comment>
<comment type="subcellular location">
    <subcellularLocation>
        <location evidence="7">Cytoplasm</location>
    </subcellularLocation>
</comment>
<comment type="domain">
    <text evidence="2">Has 3 domains, the helical N-terminus (residues 18-124), a beta-barrel central domain (125-233) and a helical C-terminus (234-417). The lid loop (residues 131-142) change conformation when FMN is bound and close the FMN-binding site. Other regions that probably contribute to FMN binding are residues 178-184 and 281-291.</text>
</comment>
<comment type="miscellaneous">
    <text evidence="1">Reduced flavin is provided by flavin reductase DszD.</text>
</comment>
<comment type="similarity">
    <text evidence="5">Belongs to the DszC flavin monooxygenase family.</text>
</comment>
<proteinExistence type="evidence at protein level"/>
<dbReference type="EC" id="1.14.14.21" evidence="3"/>
<dbReference type="EMBL" id="LC027463">
    <property type="protein sequence ID" value="BAQ25859.1"/>
    <property type="molecule type" value="Genomic_DNA"/>
</dbReference>
<dbReference type="PDB" id="3X0X">
    <property type="method" value="X-ray"/>
    <property type="resolution" value="2.11 A"/>
    <property type="chains" value="A/B/C/D/E/F/G/H=1-417"/>
</dbReference>
<dbReference type="PDB" id="3X0Y">
    <property type="method" value="X-ray"/>
    <property type="resolution" value="2.30 A"/>
    <property type="chains" value="A/B/C/D/E/F/G/H=1-417"/>
</dbReference>
<dbReference type="PDBsum" id="3X0X"/>
<dbReference type="PDBsum" id="3X0Y"/>
<dbReference type="SMR" id="A0A0C6DRW4"/>
<dbReference type="KEGG" id="ag:BAQ25859"/>
<dbReference type="BRENDA" id="1.14.14.21">
    <property type="organism ID" value="5389"/>
</dbReference>
<dbReference type="UniPathway" id="UPA00346"/>
<dbReference type="EvolutionaryTrace" id="A0A0C6DRW4"/>
<dbReference type="GO" id="GO:0005737">
    <property type="term" value="C:cytoplasm"/>
    <property type="evidence" value="ECO:0007669"/>
    <property type="project" value="UniProtKB-SubCell"/>
</dbReference>
<dbReference type="GO" id="GO:0008470">
    <property type="term" value="F:3-methylbutanoyl-CoA dehydrogenase activity"/>
    <property type="evidence" value="ECO:0007669"/>
    <property type="project" value="TreeGrafter"/>
</dbReference>
<dbReference type="GO" id="GO:0050660">
    <property type="term" value="F:flavin adenine dinucleotide binding"/>
    <property type="evidence" value="ECO:0007669"/>
    <property type="project" value="InterPro"/>
</dbReference>
<dbReference type="GO" id="GO:0004497">
    <property type="term" value="F:monooxygenase activity"/>
    <property type="evidence" value="ECO:0007669"/>
    <property type="project" value="UniProtKB-KW"/>
</dbReference>
<dbReference type="GO" id="GO:0018896">
    <property type="term" value="P:dibenzothiophene catabolic process"/>
    <property type="evidence" value="ECO:0007669"/>
    <property type="project" value="UniProtKB-UniPathway"/>
</dbReference>
<dbReference type="GO" id="GO:0006552">
    <property type="term" value="P:L-leucine catabolic process"/>
    <property type="evidence" value="ECO:0007669"/>
    <property type="project" value="TreeGrafter"/>
</dbReference>
<dbReference type="CDD" id="cd01163">
    <property type="entry name" value="DszC"/>
    <property type="match status" value="1"/>
</dbReference>
<dbReference type="Gene3D" id="1.10.540.10">
    <property type="entry name" value="Acyl-CoA dehydrogenase/oxidase, N-terminal domain"/>
    <property type="match status" value="1"/>
</dbReference>
<dbReference type="Gene3D" id="2.40.110.10">
    <property type="entry name" value="Butyryl-CoA Dehydrogenase, subunit A, domain 2"/>
    <property type="match status" value="1"/>
</dbReference>
<dbReference type="Gene3D" id="1.20.140.10">
    <property type="entry name" value="Butyryl-CoA Dehydrogenase, subunit A, domain 3"/>
    <property type="match status" value="1"/>
</dbReference>
<dbReference type="InterPro" id="IPR013107">
    <property type="entry name" value="Acyl-CoA_DH_C"/>
</dbReference>
<dbReference type="InterPro" id="IPR006091">
    <property type="entry name" value="Acyl-CoA_Oxase/DH_mid-dom"/>
</dbReference>
<dbReference type="InterPro" id="IPR046373">
    <property type="entry name" value="Acyl-CoA_Oxase/DH_mid-dom_sf"/>
</dbReference>
<dbReference type="InterPro" id="IPR036250">
    <property type="entry name" value="AcylCo_DH-like_C"/>
</dbReference>
<dbReference type="InterPro" id="IPR013786">
    <property type="entry name" value="AcylCoA_DH/ox_N"/>
</dbReference>
<dbReference type="InterPro" id="IPR037069">
    <property type="entry name" value="AcylCoA_DH/ox_N_sf"/>
</dbReference>
<dbReference type="InterPro" id="IPR009100">
    <property type="entry name" value="AcylCoA_DH/oxidase_NM_dom_sf"/>
</dbReference>
<dbReference type="InterPro" id="IPR049992">
    <property type="entry name" value="DszC"/>
</dbReference>
<dbReference type="NCBIfam" id="NF043015">
    <property type="entry name" value="DibenthMonoxDszC"/>
    <property type="match status" value="1"/>
</dbReference>
<dbReference type="PANTHER" id="PTHR43884">
    <property type="entry name" value="ACYL-COA DEHYDROGENASE"/>
    <property type="match status" value="1"/>
</dbReference>
<dbReference type="PANTHER" id="PTHR43884:SF12">
    <property type="entry name" value="ISOVALERYL-COA DEHYDROGENASE, MITOCHONDRIAL-RELATED"/>
    <property type="match status" value="1"/>
</dbReference>
<dbReference type="Pfam" id="PF08028">
    <property type="entry name" value="Acyl-CoA_dh_2"/>
    <property type="match status" value="1"/>
</dbReference>
<dbReference type="Pfam" id="PF02770">
    <property type="entry name" value="Acyl-CoA_dh_M"/>
    <property type="match status" value="1"/>
</dbReference>
<dbReference type="Pfam" id="PF02771">
    <property type="entry name" value="Acyl-CoA_dh_N"/>
    <property type="match status" value="1"/>
</dbReference>
<dbReference type="PIRSF" id="PIRSF016578">
    <property type="entry name" value="HsaA"/>
    <property type="match status" value="1"/>
</dbReference>
<dbReference type="SUPFAM" id="SSF47203">
    <property type="entry name" value="Acyl-CoA dehydrogenase C-terminal domain-like"/>
    <property type="match status" value="1"/>
</dbReference>
<dbReference type="SUPFAM" id="SSF56645">
    <property type="entry name" value="Acyl-CoA dehydrogenase NM domain-like"/>
    <property type="match status" value="1"/>
</dbReference>
<keyword id="KW-0002">3D-structure</keyword>
<keyword id="KW-0963">Cytoplasm</keyword>
<keyword id="KW-0903">Direct protein sequencing</keyword>
<keyword id="KW-0285">Flavoprotein</keyword>
<keyword id="KW-0288">FMN</keyword>
<keyword id="KW-0503">Monooxygenase</keyword>
<keyword id="KW-0547">Nucleotide-binding</keyword>
<keyword id="KW-0560">Oxidoreductase</keyword>
<gene>
    <name evidence="4" type="primary">dszC</name>
</gene>
<organism>
    <name type="scientific">Rhodococcus erythropolis</name>
    <name type="common">Arthrobacter picolinophilus</name>
    <dbReference type="NCBI Taxonomy" id="1833"/>
    <lineage>
        <taxon>Bacteria</taxon>
        <taxon>Bacillati</taxon>
        <taxon>Actinomycetota</taxon>
        <taxon>Actinomycetes</taxon>
        <taxon>Mycobacteriales</taxon>
        <taxon>Nocardiaceae</taxon>
        <taxon>Rhodococcus</taxon>
        <taxon>Rhodococcus erythropolis group</taxon>
    </lineage>
</organism>
<accession>A0A0C6DRW4</accession>
<sequence>MTLSPEKQHVRPRDAADNDPVAVARGLAEKWRATAVERDRAGGSATAEREDLRASGLLSLLVPREYGGWGADWPTAIEVVREIAAADGSLGHLFGYHLTNAPMIELIGSQEQEEHLYTQIAQNNWWTGNASSENNSHVLDWKVRATPTEDGGYVLNGTKHFCSGAKGSDLLFVFGVVQDDSPQQGAIIAAAIPTSRAGVTPNDDWAAIGMRQTDSGSTDFHNVKVEPDEVLGAPNAFVLAFIQSERGSLFAPIAQLIFANVYLGIAHGALDAAREYTRTQARPWTPAGIQQATEDPYTIRSYGEFTIALQGADAAAREAAHLLQTVWDKGDALTPEDRGELMVKVSGVKALATNAALNISSGVFEVIGARGTHPRYGFDRFWRNVRTHSLHDPVSYKIADVGKHTLNGQYPIPGFTS</sequence>
<evidence type="ECO:0000269" key="1">
    <source>
    </source>
</evidence>
<evidence type="ECO:0000269" key="2">
    <source>
    </source>
</evidence>
<evidence type="ECO:0000269" key="3">
    <source ref="2"/>
</evidence>
<evidence type="ECO:0000303" key="4">
    <source>
    </source>
</evidence>
<evidence type="ECO:0000305" key="5"/>
<evidence type="ECO:0000305" key="6">
    <source>
    </source>
</evidence>
<evidence type="ECO:0000305" key="7">
    <source ref="2"/>
</evidence>
<evidence type="ECO:0007744" key="8">
    <source>
        <dbReference type="PDB" id="3X0X"/>
    </source>
</evidence>
<evidence type="ECO:0007744" key="9">
    <source>
        <dbReference type="PDB" id="3X0Y"/>
    </source>
</evidence>
<evidence type="ECO:0007829" key="10">
    <source>
        <dbReference type="PDB" id="3X0X"/>
    </source>
</evidence>
<evidence type="ECO:0007829" key="11">
    <source>
        <dbReference type="PDB" id="3X0Y"/>
    </source>
</evidence>